<feature type="chain" id="PRO_1000023500" description="3-dehydroquinate dehydratase">
    <location>
        <begin position="1"/>
        <end position="147"/>
    </location>
</feature>
<feature type="active site" description="Proton acceptor" evidence="1">
    <location>
        <position position="23"/>
    </location>
</feature>
<feature type="active site" description="Proton donor" evidence="1">
    <location>
        <position position="101"/>
    </location>
</feature>
<feature type="binding site" evidence="1">
    <location>
        <position position="75"/>
    </location>
    <ligand>
        <name>substrate</name>
    </ligand>
</feature>
<feature type="binding site" evidence="1">
    <location>
        <position position="81"/>
    </location>
    <ligand>
        <name>substrate</name>
    </ligand>
</feature>
<feature type="binding site" evidence="1">
    <location>
        <position position="88"/>
    </location>
    <ligand>
        <name>substrate</name>
    </ligand>
</feature>
<feature type="binding site" evidence="1">
    <location>
        <begin position="102"/>
        <end position="103"/>
    </location>
    <ligand>
        <name>substrate</name>
    </ligand>
</feature>
<feature type="binding site" evidence="1">
    <location>
        <position position="112"/>
    </location>
    <ligand>
        <name>substrate</name>
    </ligand>
</feature>
<feature type="site" description="Transition state stabilizer" evidence="1">
    <location>
        <position position="18"/>
    </location>
</feature>
<keyword id="KW-0028">Amino-acid biosynthesis</keyword>
<keyword id="KW-0057">Aromatic amino acid biosynthesis</keyword>
<keyword id="KW-0456">Lyase</keyword>
<keyword id="KW-1185">Reference proteome</keyword>
<gene>
    <name evidence="1" type="primary">aroQ</name>
    <name type="ordered locus">PST_3272</name>
</gene>
<organism>
    <name type="scientific">Stutzerimonas stutzeri (strain A1501)</name>
    <name type="common">Pseudomonas stutzeri</name>
    <dbReference type="NCBI Taxonomy" id="379731"/>
    <lineage>
        <taxon>Bacteria</taxon>
        <taxon>Pseudomonadati</taxon>
        <taxon>Pseudomonadota</taxon>
        <taxon>Gammaproteobacteria</taxon>
        <taxon>Pseudomonadales</taxon>
        <taxon>Pseudomonadaceae</taxon>
        <taxon>Stutzerimonas</taxon>
    </lineage>
</organism>
<reference key="1">
    <citation type="journal article" date="2008" name="Proc. Natl. Acad. Sci. U.S.A.">
        <title>Nitrogen fixation island and rhizosphere competence traits in the genome of root-associated Pseudomonas stutzeri A1501.</title>
        <authorList>
            <person name="Yan Y."/>
            <person name="Yang J."/>
            <person name="Dou Y."/>
            <person name="Chen M."/>
            <person name="Ping S."/>
            <person name="Peng J."/>
            <person name="Lu W."/>
            <person name="Zhang W."/>
            <person name="Yao Z."/>
            <person name="Li H."/>
            <person name="Liu W."/>
            <person name="He S."/>
            <person name="Geng L."/>
            <person name="Zhang X."/>
            <person name="Yang F."/>
            <person name="Yu H."/>
            <person name="Zhan Y."/>
            <person name="Li D."/>
            <person name="Lin Z."/>
            <person name="Wang Y."/>
            <person name="Elmerich C."/>
            <person name="Lin M."/>
            <person name="Jin Q."/>
        </authorList>
    </citation>
    <scope>NUCLEOTIDE SEQUENCE [LARGE SCALE GENOMIC DNA]</scope>
    <source>
        <strain>A1501</strain>
    </source>
</reference>
<name>AROQ_STUS1</name>
<protein>
    <recommendedName>
        <fullName evidence="1">3-dehydroquinate dehydratase</fullName>
        <shortName evidence="1">3-dehydroquinase</shortName>
        <ecNumber evidence="1">4.2.1.10</ecNumber>
    </recommendedName>
    <alternativeName>
        <fullName evidence="1">Type II DHQase</fullName>
    </alternativeName>
</protein>
<sequence length="147" mass="15946">MATLLVLHGPNLNLLGTREPGVYGAVTLAQINQDLEQRARAAGHHLLHLQSNAEYELIERIHAARSEGVDFILINPAAFTHTSVALRDALLAVSIPFIEVHLSNVHKREPFRHHSYFSDVAVGVICGLGASGYRLALEAALEQLAAS</sequence>
<proteinExistence type="inferred from homology"/>
<evidence type="ECO:0000255" key="1">
    <source>
        <dbReference type="HAMAP-Rule" id="MF_00169"/>
    </source>
</evidence>
<comment type="function">
    <text evidence="1">Catalyzes a trans-dehydration via an enolate intermediate.</text>
</comment>
<comment type="catalytic activity">
    <reaction evidence="1">
        <text>3-dehydroquinate = 3-dehydroshikimate + H2O</text>
        <dbReference type="Rhea" id="RHEA:21096"/>
        <dbReference type="ChEBI" id="CHEBI:15377"/>
        <dbReference type="ChEBI" id="CHEBI:16630"/>
        <dbReference type="ChEBI" id="CHEBI:32364"/>
        <dbReference type="EC" id="4.2.1.10"/>
    </reaction>
</comment>
<comment type="pathway">
    <text evidence="1">Metabolic intermediate biosynthesis; chorismate biosynthesis; chorismate from D-erythrose 4-phosphate and phosphoenolpyruvate: step 3/7.</text>
</comment>
<comment type="subunit">
    <text evidence="1">Homododecamer.</text>
</comment>
<comment type="similarity">
    <text evidence="1">Belongs to the type-II 3-dehydroquinase family.</text>
</comment>
<accession>A4VPK2</accession>
<dbReference type="EC" id="4.2.1.10" evidence="1"/>
<dbReference type="EMBL" id="CP000304">
    <property type="protein sequence ID" value="ABP80903.1"/>
    <property type="molecule type" value="Genomic_DNA"/>
</dbReference>
<dbReference type="RefSeq" id="WP_011914336.1">
    <property type="nucleotide sequence ID" value="NC_009434.1"/>
</dbReference>
<dbReference type="SMR" id="A4VPK2"/>
<dbReference type="GeneID" id="66822669"/>
<dbReference type="KEGG" id="psa:PST_3272"/>
<dbReference type="eggNOG" id="COG0757">
    <property type="taxonomic scope" value="Bacteria"/>
</dbReference>
<dbReference type="HOGENOM" id="CLU_090968_1_0_6"/>
<dbReference type="UniPathway" id="UPA00053">
    <property type="reaction ID" value="UER00086"/>
</dbReference>
<dbReference type="Proteomes" id="UP000000233">
    <property type="component" value="Chromosome"/>
</dbReference>
<dbReference type="GO" id="GO:0003855">
    <property type="term" value="F:3-dehydroquinate dehydratase activity"/>
    <property type="evidence" value="ECO:0007669"/>
    <property type="project" value="UniProtKB-UniRule"/>
</dbReference>
<dbReference type="GO" id="GO:0008652">
    <property type="term" value="P:amino acid biosynthetic process"/>
    <property type="evidence" value="ECO:0007669"/>
    <property type="project" value="UniProtKB-KW"/>
</dbReference>
<dbReference type="GO" id="GO:0009073">
    <property type="term" value="P:aromatic amino acid family biosynthetic process"/>
    <property type="evidence" value="ECO:0007669"/>
    <property type="project" value="UniProtKB-KW"/>
</dbReference>
<dbReference type="GO" id="GO:0009423">
    <property type="term" value="P:chorismate biosynthetic process"/>
    <property type="evidence" value="ECO:0007669"/>
    <property type="project" value="UniProtKB-UniRule"/>
</dbReference>
<dbReference type="GO" id="GO:0019631">
    <property type="term" value="P:quinate catabolic process"/>
    <property type="evidence" value="ECO:0007669"/>
    <property type="project" value="TreeGrafter"/>
</dbReference>
<dbReference type="CDD" id="cd00466">
    <property type="entry name" value="DHQase_II"/>
    <property type="match status" value="1"/>
</dbReference>
<dbReference type="Gene3D" id="3.40.50.9100">
    <property type="entry name" value="Dehydroquinase, class II"/>
    <property type="match status" value="1"/>
</dbReference>
<dbReference type="HAMAP" id="MF_00169">
    <property type="entry name" value="AroQ"/>
    <property type="match status" value="1"/>
</dbReference>
<dbReference type="InterPro" id="IPR001874">
    <property type="entry name" value="DHquinase_II"/>
</dbReference>
<dbReference type="InterPro" id="IPR018509">
    <property type="entry name" value="DHquinase_II_CS"/>
</dbReference>
<dbReference type="InterPro" id="IPR036441">
    <property type="entry name" value="DHquinase_II_sf"/>
</dbReference>
<dbReference type="NCBIfam" id="TIGR01088">
    <property type="entry name" value="aroQ"/>
    <property type="match status" value="1"/>
</dbReference>
<dbReference type="NCBIfam" id="NF003804">
    <property type="entry name" value="PRK05395.1-1"/>
    <property type="match status" value="1"/>
</dbReference>
<dbReference type="NCBIfam" id="NF003805">
    <property type="entry name" value="PRK05395.1-2"/>
    <property type="match status" value="1"/>
</dbReference>
<dbReference type="NCBIfam" id="NF003806">
    <property type="entry name" value="PRK05395.1-3"/>
    <property type="match status" value="1"/>
</dbReference>
<dbReference type="NCBIfam" id="NF003807">
    <property type="entry name" value="PRK05395.1-4"/>
    <property type="match status" value="1"/>
</dbReference>
<dbReference type="PANTHER" id="PTHR21272">
    <property type="entry name" value="CATABOLIC 3-DEHYDROQUINASE"/>
    <property type="match status" value="1"/>
</dbReference>
<dbReference type="PANTHER" id="PTHR21272:SF3">
    <property type="entry name" value="CATABOLIC 3-DEHYDROQUINASE"/>
    <property type="match status" value="1"/>
</dbReference>
<dbReference type="Pfam" id="PF01220">
    <property type="entry name" value="DHquinase_II"/>
    <property type="match status" value="1"/>
</dbReference>
<dbReference type="PIRSF" id="PIRSF001399">
    <property type="entry name" value="DHquinase_II"/>
    <property type="match status" value="1"/>
</dbReference>
<dbReference type="SUPFAM" id="SSF52304">
    <property type="entry name" value="Type II 3-dehydroquinate dehydratase"/>
    <property type="match status" value="1"/>
</dbReference>
<dbReference type="PROSITE" id="PS01029">
    <property type="entry name" value="DEHYDROQUINASE_II"/>
    <property type="match status" value="1"/>
</dbReference>